<proteinExistence type="evidence at protein level"/>
<evidence type="ECO:0000250" key="1">
    <source>
        <dbReference type="UniProtKB" id="P04798"/>
    </source>
</evidence>
<evidence type="ECO:0000255" key="2"/>
<evidence type="ECO:0000269" key="3">
    <source>
    </source>
</evidence>
<evidence type="ECO:0000303" key="4">
    <source>
    </source>
</evidence>
<evidence type="ECO:0000305" key="5"/>
<name>C90B5_TRIFG</name>
<accession>A0A517FND3</accession>
<dbReference type="EC" id="1.14.14.-" evidence="3"/>
<dbReference type="EMBL" id="MK636707">
    <property type="protein sequence ID" value="QDS03633.1"/>
    <property type="molecule type" value="mRNA"/>
</dbReference>
<dbReference type="SMR" id="A0A517FND3"/>
<dbReference type="UniPathway" id="UPA00296"/>
<dbReference type="GO" id="GO:0016020">
    <property type="term" value="C:membrane"/>
    <property type="evidence" value="ECO:0007669"/>
    <property type="project" value="UniProtKB-SubCell"/>
</dbReference>
<dbReference type="GO" id="GO:0020037">
    <property type="term" value="F:heme binding"/>
    <property type="evidence" value="ECO:0007669"/>
    <property type="project" value="InterPro"/>
</dbReference>
<dbReference type="GO" id="GO:0005506">
    <property type="term" value="F:iron ion binding"/>
    <property type="evidence" value="ECO:0007669"/>
    <property type="project" value="InterPro"/>
</dbReference>
<dbReference type="GO" id="GO:0004497">
    <property type="term" value="F:monooxygenase activity"/>
    <property type="evidence" value="ECO:0007669"/>
    <property type="project" value="UniProtKB-KW"/>
</dbReference>
<dbReference type="GO" id="GO:0016705">
    <property type="term" value="F:oxidoreductase activity, acting on paired donors, with incorporation or reduction of molecular oxygen"/>
    <property type="evidence" value="ECO:0000314"/>
    <property type="project" value="UniProtKB"/>
</dbReference>
<dbReference type="GO" id="GO:0016132">
    <property type="term" value="P:brassinosteroid biosynthetic process"/>
    <property type="evidence" value="ECO:0007669"/>
    <property type="project" value="TreeGrafter"/>
</dbReference>
<dbReference type="GO" id="GO:0010268">
    <property type="term" value="P:brassinosteroid homeostasis"/>
    <property type="evidence" value="ECO:0007669"/>
    <property type="project" value="TreeGrafter"/>
</dbReference>
<dbReference type="GO" id="GO:0008203">
    <property type="term" value="P:cholesterol metabolic process"/>
    <property type="evidence" value="ECO:0000314"/>
    <property type="project" value="UniProtKB"/>
</dbReference>
<dbReference type="GO" id="GO:0016135">
    <property type="term" value="P:saponin biosynthetic process"/>
    <property type="evidence" value="ECO:0000314"/>
    <property type="project" value="UniProtKB"/>
</dbReference>
<dbReference type="GO" id="GO:0006694">
    <property type="term" value="P:steroid biosynthetic process"/>
    <property type="evidence" value="ECO:0000314"/>
    <property type="project" value="UniProtKB"/>
</dbReference>
<dbReference type="CDD" id="cd11043">
    <property type="entry name" value="CYP90-like"/>
    <property type="match status" value="1"/>
</dbReference>
<dbReference type="Gene3D" id="1.10.630.10">
    <property type="entry name" value="Cytochrome P450"/>
    <property type="match status" value="1"/>
</dbReference>
<dbReference type="InterPro" id="IPR001128">
    <property type="entry name" value="Cyt_P450"/>
</dbReference>
<dbReference type="InterPro" id="IPR017972">
    <property type="entry name" value="Cyt_P450_CS"/>
</dbReference>
<dbReference type="InterPro" id="IPR002401">
    <property type="entry name" value="Cyt_P450_E_grp-I"/>
</dbReference>
<dbReference type="InterPro" id="IPR036396">
    <property type="entry name" value="Cyt_P450_sf"/>
</dbReference>
<dbReference type="PANTHER" id="PTHR24286">
    <property type="entry name" value="CYTOCHROME P450 26"/>
    <property type="match status" value="1"/>
</dbReference>
<dbReference type="PANTHER" id="PTHR24286:SF194">
    <property type="entry name" value="STEROID (22S)-HYDROXYLASE"/>
    <property type="match status" value="1"/>
</dbReference>
<dbReference type="Pfam" id="PF00067">
    <property type="entry name" value="p450"/>
    <property type="match status" value="1"/>
</dbReference>
<dbReference type="PRINTS" id="PR00463">
    <property type="entry name" value="EP450I"/>
</dbReference>
<dbReference type="PRINTS" id="PR00385">
    <property type="entry name" value="P450"/>
</dbReference>
<dbReference type="SUPFAM" id="SSF48264">
    <property type="entry name" value="Cytochrome P450"/>
    <property type="match status" value="1"/>
</dbReference>
<dbReference type="PROSITE" id="PS00086">
    <property type="entry name" value="CYTOCHROME_P450"/>
    <property type="match status" value="1"/>
</dbReference>
<organism>
    <name type="scientific">Trigonella foenum-graecum</name>
    <name type="common">Fenugreek</name>
    <dbReference type="NCBI Taxonomy" id="78534"/>
    <lineage>
        <taxon>Eukaryota</taxon>
        <taxon>Viridiplantae</taxon>
        <taxon>Streptophyta</taxon>
        <taxon>Embryophyta</taxon>
        <taxon>Tracheophyta</taxon>
        <taxon>Spermatophyta</taxon>
        <taxon>Magnoliopsida</taxon>
        <taxon>eudicotyledons</taxon>
        <taxon>Gunneridae</taxon>
        <taxon>Pentapetalae</taxon>
        <taxon>rosids</taxon>
        <taxon>fabids</taxon>
        <taxon>Fabales</taxon>
        <taxon>Fabaceae</taxon>
        <taxon>Papilionoideae</taxon>
        <taxon>50 kb inversion clade</taxon>
        <taxon>NPAAA clade</taxon>
        <taxon>Hologalegina</taxon>
        <taxon>IRL clade</taxon>
        <taxon>Trifolieae</taxon>
        <taxon>Trigonella</taxon>
    </lineage>
</organism>
<feature type="chain" id="PRO_0000456404" description="Cholesterol 16,22-dihydroxylase CYP90G4">
    <location>
        <begin position="1"/>
        <end position="481"/>
    </location>
</feature>
<feature type="transmembrane region" description="Helical" evidence="2">
    <location>
        <begin position="4"/>
        <end position="24"/>
    </location>
</feature>
<feature type="binding site" description="axial binding residue" evidence="1">
    <location>
        <position position="426"/>
    </location>
    <ligand>
        <name>heme</name>
        <dbReference type="ChEBI" id="CHEBI:30413"/>
    </ligand>
    <ligandPart>
        <name>Fe</name>
        <dbReference type="ChEBI" id="CHEBI:18248"/>
    </ligandPart>
</feature>
<protein>
    <recommendedName>
        <fullName evidence="4">Cholesterol 16,22-dihydroxylase CYP90G4</fullName>
        <ecNumber evidence="3">1.14.14.-</ecNumber>
    </recommendedName>
    <alternativeName>
        <fullName evidence="4">Cytochrome P450 CYP90B50</fullName>
        <shortName evidence="4">PpCYP90B50</shortName>
    </alternativeName>
</protein>
<gene>
    <name evidence="4" type="primary">CYP90B50</name>
</gene>
<keyword id="KW-0153">Cholesterol metabolism</keyword>
<keyword id="KW-0349">Heme</keyword>
<keyword id="KW-0408">Iron</keyword>
<keyword id="KW-0444">Lipid biosynthesis</keyword>
<keyword id="KW-0443">Lipid metabolism</keyword>
<keyword id="KW-0472">Membrane</keyword>
<keyword id="KW-0479">Metal-binding</keyword>
<keyword id="KW-0503">Monooxygenase</keyword>
<keyword id="KW-0560">Oxidoreductase</keyword>
<keyword id="KW-0752">Steroid biosynthesis</keyword>
<keyword id="KW-0753">Steroid metabolism</keyword>
<keyword id="KW-1207">Sterol metabolism</keyword>
<keyword id="KW-0812">Transmembrane</keyword>
<keyword id="KW-1133">Transmembrane helix</keyword>
<comment type="function">
    <text evidence="3">Involved in the biosynthesis of spiroketal steroid and saponin natural products from cholesterol such as diosgenin and analogs (e.g. furostanol and spirostanol), plant defense compounds used as main precursors for the industrial production of steroid hormones (PubMed:31324795). During the 5,6-spiroketalization of cholesterol, catalyzes the hydroxylation of cholesterol to form 16S,22S-dihydroxycholesterol and, possibly, the subsequent conversion of 16S,22S-dihydroxycholesterol into 16-oxo-22-hydroxy-cholesterol and 16-hydroxy-22-oxo-cholesterol (PubMed:31324795). 16-hydroxy-22-oxo-cholesterol submit a spontaneous reaction leading to the production of furostanol-type steroid diastereomers, precursors of diosgenin (PubMed:31324795).</text>
</comment>
<comment type="pathway">
    <text evidence="3">Steroid metabolism; cholesterol metabolism.</text>
</comment>
<comment type="subcellular location">
    <subcellularLocation>
        <location evidence="2">Membrane</location>
        <topology evidence="2">Single-pass membrane protein</topology>
    </subcellularLocation>
</comment>
<comment type="tissue specificity">
    <text evidence="3">Mainly expressed in leaves and seed pods and, at low levels, in flowers and stems.</text>
</comment>
<comment type="biotechnology">
    <text evidence="3">The coexpression of CYP90B50 and CYP82J17 in the yeast strain RH6829, which was engineered to accumulate cholesterol, leads to the production of diosgenin, the main precursor for the industrial production of steroid hormones.</text>
</comment>
<comment type="similarity">
    <text evidence="5">Belongs to the cytochrome P450 family.</text>
</comment>
<sequence length="481" mass="55123">MSNSYLSFFVLSSILVLTLIFFFMKRKKTKFNLPPGSMGLPFIGETFGYLKPCSATTMGAYMENRIARYGTIYKTKLFGEDTIVSADAELNRLIFQNHGKLFDTNYPKSIAEILGKWSILTIVGDVHRELRNVSLNFMSYARLKTHFLKDSENSALLVLNSWKENCTIEAQSEAKKFTFNVITKQIMSLDPRNPETEELRDEYLSFMNGVVSAPFNLPGTPYRKALKSRKIILKFIEGKMEERIKRNQEGKKDLEENDDLLNWVLKHTNLSTDQILDLVLGMVFGGYETSSAATALAMYFLPGCPKAIQQLREEHQAIARSKKKAGEVELTWDDYKKMEFTHCVVNETLRLGNVVRFVHRKSIKDVRFKGYDIPCGWNVMPVISAVHLNPSNFEDPQHFNPWRWQSGNWASLNSNFMPFGGGAKICPGMELAKLEVAVFIHHIILKYNWDLVDVDDKPIIHPLVDFPKGLRIRVQRQPTLI</sequence>
<reference key="1">
    <citation type="journal article" date="2019" name="Nat. Commun.">
        <title>Repeated evolution of cytochrome P450-mediated spiroketal steroid biosynthesis in plants.</title>
        <authorList>
            <person name="Christ B."/>
            <person name="Xu C."/>
            <person name="Xu M."/>
            <person name="Li F.-S."/>
            <person name="Wada N."/>
            <person name="Mitchell A.J."/>
            <person name="Han X.-L."/>
            <person name="Wen M.-L."/>
            <person name="Fujita M."/>
            <person name="Weng J.-K."/>
        </authorList>
    </citation>
    <scope>NUCLEOTIDE SEQUENCE [MRNA]</scope>
    <scope>FUNCTION</scope>
    <scope>CATALYTIC ACTIVITY</scope>
    <scope>PATHWAY</scope>
    <scope>BIOTECHNOLOGY</scope>
    <scope>TISSUE SPECIFICITY</scope>
    <source>
        <tissue>Flower</tissue>
        <tissue>Leaf</tissue>
        <tissue>Pod</tissue>
        <tissue>Stem</tissue>
    </source>
</reference>